<comment type="subcellular location">
    <subcellularLocation>
        <location evidence="3">Host membrane</location>
        <topology evidence="3">Single-pass type I membrane protein</topology>
    </subcellularLocation>
</comment>
<keyword id="KW-0325">Glycoprotein</keyword>
<keyword id="KW-1043">Host membrane</keyword>
<keyword id="KW-0472">Membrane</keyword>
<keyword id="KW-1185">Reference proteome</keyword>
<keyword id="KW-0732">Signal</keyword>
<keyword id="KW-0812">Transmembrane</keyword>
<keyword id="KW-1133">Transmembrane helix</keyword>
<protein>
    <recommendedName>
        <fullName>Putative transmembrane protein ORF88</fullName>
    </recommendedName>
</protein>
<organismHost>
    <name type="scientific">Magallana gigas</name>
    <name type="common">Pacific oyster</name>
    <name type="synonym">Crassostrea gigas</name>
    <dbReference type="NCBI Taxonomy" id="29159"/>
</organismHost>
<organismHost>
    <name type="scientific">Pecten maximus</name>
    <name type="common">King scallop</name>
    <name type="synonym">Pilgrim's clam</name>
    <dbReference type="NCBI Taxonomy" id="6579"/>
</organismHost>
<sequence length="748" mass="83088">MIIMKSIILLLAWFLTKTQANMLTESLYLSEYEGSVVLNIIDKNLNGISTLSIFNDSTKLQEVRYVASVCSLRSGSFNITCNVITYGTYHVRMFLSGLNMSAFDLYRLRYVYVGLRDAINYNPKYAEAVMAPFALIGNNNIVTIKLIKDGDNITVGCGFGNVDLSTVNTHASKIGRNINPRFMVGVYTNDSNKLIEDDIYSRYTDSESAGVMRKCNLNEVKTTPQEDCIQPFCTKGTVYGNNLVYGSRLRCFSRTRCSQRSRTVPQSVPWYIPSGFTGKQFMYLDNRLGYLLGLDLTTAIFKYTPIVVGHIVSEYLTGIMNYKRLSVRKGPNIDMRGIIGGEIKMILIRNYRKMLDMSGFTPLPVNGCYVTVIKFIGDKRVFNRVWTPSNNTDDGEEHVFVFHQKRSSNIRDYTLRIFPDSGMDTEGSKYTMNTITDVGCSRETHHKSVYPATIKKAIERFCVDQPNISCEYVKDIDRVDINPCGCKQRANRCGERYSNNTLKATIEFEVPKIYDTPYTCEFLGYKSVNSLTFDSPPPPPTTTQAPPPPPTTTQAPPPPPTTTQAPPPPIVINTTAAPLAPITNATLPPSDVITPEAVNLTDDTPVVNEPVNSTFINDTDVLDDSPTTSAPQAPGIVGIIVNKITTTPAPSIGRAPIPPPDVPVEPPRSIPTTNAPSPEEDTVVLSKSDIMRRFLIRLKTRDGETVDIYTWPELNLAPFKTLSYAGIGVVSFALLFTILVVCLIKFSI</sequence>
<proteinExistence type="inferred from homology"/>
<reference key="1">
    <citation type="journal article" date="2005" name="J. Gen. Virol.">
        <title>A novel class of herpesvirus with bivalve hosts.</title>
        <authorList>
            <person name="Davison A.J."/>
            <person name="Trus B.L."/>
            <person name="Cheng N."/>
            <person name="Steven A.C."/>
            <person name="Watson M.S."/>
            <person name="Cunningham C."/>
            <person name="Le Deuff R.M."/>
            <person name="Renault T."/>
        </authorList>
    </citation>
    <scope>NUCLEOTIDE SEQUENCE [LARGE SCALE GENOMIC DNA]</scope>
</reference>
<name>Y088_OSHVF</name>
<dbReference type="EMBL" id="AY509253">
    <property type="protein sequence ID" value="AAS00974.1"/>
    <property type="molecule type" value="Genomic_DNA"/>
</dbReference>
<dbReference type="RefSeq" id="YP_024627.1">
    <property type="nucleotide sequence ID" value="NC_005881.2"/>
</dbReference>
<dbReference type="KEGG" id="vg:2948177"/>
<dbReference type="Proteomes" id="UP000007021">
    <property type="component" value="Segment"/>
</dbReference>
<dbReference type="GO" id="GO:0033644">
    <property type="term" value="C:host cell membrane"/>
    <property type="evidence" value="ECO:0007669"/>
    <property type="project" value="UniProtKB-SubCell"/>
</dbReference>
<dbReference type="GO" id="GO:0016020">
    <property type="term" value="C:membrane"/>
    <property type="evidence" value="ECO:0007669"/>
    <property type="project" value="UniProtKB-KW"/>
</dbReference>
<organism>
    <name type="scientific">Ostreid herpesvirus 1 (isolate France)</name>
    <name type="common">OsHV-1</name>
    <name type="synonym">Pacific oyster herpesvirus</name>
    <dbReference type="NCBI Taxonomy" id="654903"/>
    <lineage>
        <taxon>Viruses</taxon>
        <taxon>Duplodnaviria</taxon>
        <taxon>Heunggongvirae</taxon>
        <taxon>Peploviricota</taxon>
        <taxon>Herviviricetes</taxon>
        <taxon>Herpesvirales</taxon>
        <taxon>Malacoherpesviridae</taxon>
        <taxon>Ostreavirus</taxon>
        <taxon>Ostreavirus ostreidmalaco1</taxon>
        <taxon>Ostreid herpesvirus 1</taxon>
    </lineage>
</organism>
<accession>Q6R7E1</accession>
<feature type="signal peptide" evidence="1">
    <location>
        <begin position="1"/>
        <end position="20"/>
    </location>
</feature>
<feature type="chain" id="PRO_0000385108" description="Putative transmembrane protein ORF88">
    <location>
        <begin position="21"/>
        <end position="748"/>
    </location>
</feature>
<feature type="topological domain" description="Extracellular" evidence="1">
    <location>
        <begin position="21"/>
        <end position="723"/>
    </location>
</feature>
<feature type="transmembrane region" description="Helical" evidence="1">
    <location>
        <begin position="724"/>
        <end position="744"/>
    </location>
</feature>
<feature type="topological domain" description="Cytoplasmic" evidence="1">
    <location>
        <begin position="745"/>
        <end position="748"/>
    </location>
</feature>
<feature type="region of interest" description="Disordered" evidence="2">
    <location>
        <begin position="531"/>
        <end position="574"/>
    </location>
</feature>
<feature type="region of interest" description="Disordered" evidence="2">
    <location>
        <begin position="650"/>
        <end position="680"/>
    </location>
</feature>
<feature type="compositionally biased region" description="Pro residues" evidence="2">
    <location>
        <begin position="535"/>
        <end position="570"/>
    </location>
</feature>
<feature type="compositionally biased region" description="Pro residues" evidence="2">
    <location>
        <begin position="656"/>
        <end position="669"/>
    </location>
</feature>
<feature type="glycosylation site" description="N-linked (GlcNAc...) asparagine; by host" evidence="1">
    <location>
        <position position="55"/>
    </location>
</feature>
<feature type="glycosylation site" description="N-linked (GlcNAc...) asparagine; by host" evidence="1">
    <location>
        <position position="78"/>
    </location>
</feature>
<feature type="glycosylation site" description="N-linked (GlcNAc...) asparagine; by host" evidence="1">
    <location>
        <position position="99"/>
    </location>
</feature>
<feature type="glycosylation site" description="N-linked (GlcNAc...) asparagine; by host" evidence="1">
    <location>
        <position position="152"/>
    </location>
</feature>
<feature type="glycosylation site" description="N-linked (GlcNAc...) asparagine; by host" evidence="1">
    <location>
        <position position="189"/>
    </location>
</feature>
<feature type="glycosylation site" description="N-linked (GlcNAc...) asparagine; by host" evidence="1">
    <location>
        <position position="390"/>
    </location>
</feature>
<feature type="glycosylation site" description="N-linked (GlcNAc...) asparagine; by host" evidence="1">
    <location>
        <position position="467"/>
    </location>
</feature>
<feature type="glycosylation site" description="N-linked (GlcNAc...) asparagine; by host" evidence="1">
    <location>
        <position position="499"/>
    </location>
</feature>
<feature type="glycosylation site" description="N-linked (GlcNAc...) asparagine; by host" evidence="1">
    <location>
        <position position="573"/>
    </location>
</feature>
<feature type="glycosylation site" description="N-linked (GlcNAc...) asparagine; by host" evidence="1">
    <location>
        <position position="584"/>
    </location>
</feature>
<feature type="glycosylation site" description="N-linked (GlcNAc...) asparagine; by host" evidence="1">
    <location>
        <position position="599"/>
    </location>
</feature>
<feature type="glycosylation site" description="N-linked (GlcNAc...) asparagine; by host" evidence="1">
    <location>
        <position position="612"/>
    </location>
</feature>
<feature type="glycosylation site" description="N-linked (GlcNAc...) asparagine; by host" evidence="1">
    <location>
        <position position="617"/>
    </location>
</feature>
<evidence type="ECO:0000255" key="1"/>
<evidence type="ECO:0000256" key="2">
    <source>
        <dbReference type="SAM" id="MobiDB-lite"/>
    </source>
</evidence>
<evidence type="ECO:0000305" key="3"/>
<gene>
    <name type="ORF">ORF88</name>
</gene>